<proteinExistence type="evidence at protein level"/>
<protein>
    <recommendedName>
        <fullName evidence="5">Sperm annulus positionning complex subunit Chibby3</fullName>
    </recommendedName>
</protein>
<reference key="1">
    <citation type="journal article" date="2009" name="PLoS Biol.">
        <title>Lineage-specific biology revealed by a finished genome assembly of the mouse.</title>
        <authorList>
            <person name="Church D.M."/>
            <person name="Goodstadt L."/>
            <person name="Hillier L.W."/>
            <person name="Zody M.C."/>
            <person name="Goldstein S."/>
            <person name="She X."/>
            <person name="Bult C.J."/>
            <person name="Agarwala R."/>
            <person name="Cherry J.L."/>
            <person name="DiCuccio M."/>
            <person name="Hlavina W."/>
            <person name="Kapustin Y."/>
            <person name="Meric P."/>
            <person name="Maglott D."/>
            <person name="Birtle Z."/>
            <person name="Marques A.C."/>
            <person name="Graves T."/>
            <person name="Zhou S."/>
            <person name="Teague B."/>
            <person name="Potamousis K."/>
            <person name="Churas C."/>
            <person name="Place M."/>
            <person name="Herschleb J."/>
            <person name="Runnheim R."/>
            <person name="Forrest D."/>
            <person name="Amos-Landgraf J."/>
            <person name="Schwartz D.C."/>
            <person name="Cheng Z."/>
            <person name="Lindblad-Toh K."/>
            <person name="Eichler E.E."/>
            <person name="Ponting C.P."/>
        </authorList>
    </citation>
    <scope>NUCLEOTIDE SEQUENCE [LARGE SCALE GENOMIC DNA]</scope>
    <source>
        <strain>C57BL/6J</strain>
    </source>
</reference>
<reference key="2">
    <citation type="journal article" date="2005" name="Science">
        <title>The transcriptional landscape of the mammalian genome.</title>
        <authorList>
            <person name="Carninci P."/>
            <person name="Kasukawa T."/>
            <person name="Katayama S."/>
            <person name="Gough J."/>
            <person name="Frith M.C."/>
            <person name="Maeda N."/>
            <person name="Oyama R."/>
            <person name="Ravasi T."/>
            <person name="Lenhard B."/>
            <person name="Wells C."/>
            <person name="Kodzius R."/>
            <person name="Shimokawa K."/>
            <person name="Bajic V.B."/>
            <person name="Brenner S.E."/>
            <person name="Batalov S."/>
            <person name="Forrest A.R."/>
            <person name="Zavolan M."/>
            <person name="Davis M.J."/>
            <person name="Wilming L.G."/>
            <person name="Aidinis V."/>
            <person name="Allen J.E."/>
            <person name="Ambesi-Impiombato A."/>
            <person name="Apweiler R."/>
            <person name="Aturaliya R.N."/>
            <person name="Bailey T.L."/>
            <person name="Bansal M."/>
            <person name="Baxter L."/>
            <person name="Beisel K.W."/>
            <person name="Bersano T."/>
            <person name="Bono H."/>
            <person name="Chalk A.M."/>
            <person name="Chiu K.P."/>
            <person name="Choudhary V."/>
            <person name="Christoffels A."/>
            <person name="Clutterbuck D.R."/>
            <person name="Crowe M.L."/>
            <person name="Dalla E."/>
            <person name="Dalrymple B.P."/>
            <person name="de Bono B."/>
            <person name="Della Gatta G."/>
            <person name="di Bernardo D."/>
            <person name="Down T."/>
            <person name="Engstrom P."/>
            <person name="Fagiolini M."/>
            <person name="Faulkner G."/>
            <person name="Fletcher C.F."/>
            <person name="Fukushima T."/>
            <person name="Furuno M."/>
            <person name="Futaki S."/>
            <person name="Gariboldi M."/>
            <person name="Georgii-Hemming P."/>
            <person name="Gingeras T.R."/>
            <person name="Gojobori T."/>
            <person name="Green R.E."/>
            <person name="Gustincich S."/>
            <person name="Harbers M."/>
            <person name="Hayashi Y."/>
            <person name="Hensch T.K."/>
            <person name="Hirokawa N."/>
            <person name="Hill D."/>
            <person name="Huminiecki L."/>
            <person name="Iacono M."/>
            <person name="Ikeo K."/>
            <person name="Iwama A."/>
            <person name="Ishikawa T."/>
            <person name="Jakt M."/>
            <person name="Kanapin A."/>
            <person name="Katoh M."/>
            <person name="Kawasawa Y."/>
            <person name="Kelso J."/>
            <person name="Kitamura H."/>
            <person name="Kitano H."/>
            <person name="Kollias G."/>
            <person name="Krishnan S.P."/>
            <person name="Kruger A."/>
            <person name="Kummerfeld S.K."/>
            <person name="Kurochkin I.V."/>
            <person name="Lareau L.F."/>
            <person name="Lazarevic D."/>
            <person name="Lipovich L."/>
            <person name="Liu J."/>
            <person name="Liuni S."/>
            <person name="McWilliam S."/>
            <person name="Madan Babu M."/>
            <person name="Madera M."/>
            <person name="Marchionni L."/>
            <person name="Matsuda H."/>
            <person name="Matsuzawa S."/>
            <person name="Miki H."/>
            <person name="Mignone F."/>
            <person name="Miyake S."/>
            <person name="Morris K."/>
            <person name="Mottagui-Tabar S."/>
            <person name="Mulder N."/>
            <person name="Nakano N."/>
            <person name="Nakauchi H."/>
            <person name="Ng P."/>
            <person name="Nilsson R."/>
            <person name="Nishiguchi S."/>
            <person name="Nishikawa S."/>
            <person name="Nori F."/>
            <person name="Ohara O."/>
            <person name="Okazaki Y."/>
            <person name="Orlando V."/>
            <person name="Pang K.C."/>
            <person name="Pavan W.J."/>
            <person name="Pavesi G."/>
            <person name="Pesole G."/>
            <person name="Petrovsky N."/>
            <person name="Piazza S."/>
            <person name="Reed J."/>
            <person name="Reid J.F."/>
            <person name="Ring B.Z."/>
            <person name="Ringwald M."/>
            <person name="Rost B."/>
            <person name="Ruan Y."/>
            <person name="Salzberg S.L."/>
            <person name="Sandelin A."/>
            <person name="Schneider C."/>
            <person name="Schoenbach C."/>
            <person name="Sekiguchi K."/>
            <person name="Semple C.A."/>
            <person name="Seno S."/>
            <person name="Sessa L."/>
            <person name="Sheng Y."/>
            <person name="Shibata Y."/>
            <person name="Shimada H."/>
            <person name="Shimada K."/>
            <person name="Silva D."/>
            <person name="Sinclair B."/>
            <person name="Sperling S."/>
            <person name="Stupka E."/>
            <person name="Sugiura K."/>
            <person name="Sultana R."/>
            <person name="Takenaka Y."/>
            <person name="Taki K."/>
            <person name="Tammoja K."/>
            <person name="Tan S.L."/>
            <person name="Tang S."/>
            <person name="Taylor M.S."/>
            <person name="Tegner J."/>
            <person name="Teichmann S.A."/>
            <person name="Ueda H.R."/>
            <person name="van Nimwegen E."/>
            <person name="Verardo R."/>
            <person name="Wei C.L."/>
            <person name="Yagi K."/>
            <person name="Yamanishi H."/>
            <person name="Zabarovsky E."/>
            <person name="Zhu S."/>
            <person name="Zimmer A."/>
            <person name="Hide W."/>
            <person name="Bult C."/>
            <person name="Grimmond S.M."/>
            <person name="Teasdale R.D."/>
            <person name="Liu E.T."/>
            <person name="Brusic V."/>
            <person name="Quackenbush J."/>
            <person name="Wahlestedt C."/>
            <person name="Mattick J.S."/>
            <person name="Hume D.A."/>
            <person name="Kai C."/>
            <person name="Sasaki D."/>
            <person name="Tomaru Y."/>
            <person name="Fukuda S."/>
            <person name="Kanamori-Katayama M."/>
            <person name="Suzuki M."/>
            <person name="Aoki J."/>
            <person name="Arakawa T."/>
            <person name="Iida J."/>
            <person name="Imamura K."/>
            <person name="Itoh M."/>
            <person name="Kato T."/>
            <person name="Kawaji H."/>
            <person name="Kawagashira N."/>
            <person name="Kawashima T."/>
            <person name="Kojima M."/>
            <person name="Kondo S."/>
            <person name="Konno H."/>
            <person name="Nakano K."/>
            <person name="Ninomiya N."/>
            <person name="Nishio T."/>
            <person name="Okada M."/>
            <person name="Plessy C."/>
            <person name="Shibata K."/>
            <person name="Shiraki T."/>
            <person name="Suzuki S."/>
            <person name="Tagami M."/>
            <person name="Waki K."/>
            <person name="Watahiki A."/>
            <person name="Okamura-Oho Y."/>
            <person name="Suzuki H."/>
            <person name="Kawai J."/>
            <person name="Hayashizaki Y."/>
        </authorList>
    </citation>
    <scope>NUCLEOTIDE SEQUENCE [LARGE SCALE MRNA] OF 10-235</scope>
    <source>
        <strain>C57BL/6J</strain>
        <tissue>Testis</tissue>
    </source>
</reference>
<reference key="3">
    <citation type="journal article" date="2024" name="J. Cell Biol.">
        <title>The Cby3/ciBAR1 complex positions the annulus along the sperm flagellum during spermiogenesis.</title>
        <authorList>
            <person name="Hoque M."/>
            <person name="Li F.Q."/>
            <person name="Weber W.D."/>
            <person name="Chen J.J."/>
            <person name="Kim E.N."/>
            <person name="Kuo P.L."/>
            <person name="Visconti P.E."/>
            <person name="Takemaru K.I."/>
        </authorList>
    </citation>
    <scope>FUNCTION</scope>
    <scope>DISRUPTION PHENOTYPE</scope>
    <scope>SUBCELLULAR LOCATION</scope>
    <scope>TISSUE SPECIFICITY</scope>
    <scope>INTERACTION WITH CIBAR1</scope>
</reference>
<dbReference type="EMBL" id="AL645904">
    <property type="protein sequence ID" value="CAI23999.1"/>
    <property type="status" value="ALT_SEQ"/>
    <property type="molecule type" value="Genomic_DNA"/>
</dbReference>
<dbReference type="EMBL" id="AK007228">
    <property type="protein sequence ID" value="BAB24904.1"/>
    <property type="molecule type" value="mRNA"/>
</dbReference>
<dbReference type="SMR" id="Q9CVN6"/>
<dbReference type="STRING" id="10090.ENSMUSP00000131004"/>
<dbReference type="PhosphoSitePlus" id="Q9CVN6"/>
<dbReference type="SwissPalm" id="Q9CVN6"/>
<dbReference type="PaxDb" id="10090-ENSMUSP00000131004"/>
<dbReference type="ProteomicsDB" id="265573"/>
<dbReference type="Antibodypedia" id="59234">
    <property type="antibodies" value="10 antibodies from 8 providers"/>
</dbReference>
<dbReference type="UCSC" id="uc007isi.1">
    <property type="organism name" value="mouse"/>
</dbReference>
<dbReference type="AGR" id="MGI:1923903"/>
<dbReference type="MGI" id="MGI:1923903">
    <property type="gene designation" value="Cby3"/>
</dbReference>
<dbReference type="VEuPathDB" id="HostDB:ENSMUSG00000050087"/>
<dbReference type="eggNOG" id="KOG4119">
    <property type="taxonomic scope" value="Eukaryota"/>
</dbReference>
<dbReference type="HOGENOM" id="CLU_1227257_0_0_1"/>
<dbReference type="InParanoid" id="Q9CVN6"/>
<dbReference type="OMA" id="LMIEPRA"/>
<dbReference type="OrthoDB" id="2145765at2759"/>
<dbReference type="PhylomeDB" id="Q9CVN6"/>
<dbReference type="TreeFam" id="TF324419"/>
<dbReference type="PRO" id="PR:Q9CVN6"/>
<dbReference type="Proteomes" id="UP000000589">
    <property type="component" value="Chromosome 11"/>
</dbReference>
<dbReference type="RNAct" id="Q9CVN6">
    <property type="molecule type" value="protein"/>
</dbReference>
<dbReference type="Bgee" id="ENSMUSG00000050087">
    <property type="expression patterns" value="Expressed in seminiferous tubule of testis and 17 other cell types or tissues"/>
</dbReference>
<dbReference type="ExpressionAtlas" id="Q9CVN6">
    <property type="expression patterns" value="baseline and differential"/>
</dbReference>
<dbReference type="GO" id="GO:0097227">
    <property type="term" value="C:sperm annulus"/>
    <property type="evidence" value="ECO:0000314"/>
    <property type="project" value="UniProtKB"/>
</dbReference>
<dbReference type="GO" id="GO:0007283">
    <property type="term" value="P:spermatogenesis"/>
    <property type="evidence" value="ECO:0000315"/>
    <property type="project" value="UniProtKB"/>
</dbReference>
<dbReference type="CDD" id="cd07429">
    <property type="entry name" value="Cby_like"/>
    <property type="match status" value="1"/>
</dbReference>
<dbReference type="InterPro" id="IPR028118">
    <property type="entry name" value="Chibby_fam"/>
</dbReference>
<dbReference type="PANTHER" id="PTHR21533">
    <property type="entry name" value="LEUCINE-RICH PROTEIN"/>
    <property type="match status" value="1"/>
</dbReference>
<dbReference type="PANTHER" id="PTHR21533:SF17">
    <property type="entry name" value="PROTEIN CHIBBY HOMOLOG 3"/>
    <property type="match status" value="1"/>
</dbReference>
<dbReference type="Pfam" id="PF14645">
    <property type="entry name" value="Chibby"/>
    <property type="match status" value="1"/>
</dbReference>
<evidence type="ECO:0000250" key="1">
    <source>
        <dbReference type="UniProtKB" id="A6NI87"/>
    </source>
</evidence>
<evidence type="ECO:0000250" key="2">
    <source>
        <dbReference type="UniProtKB" id="Q9Y3M2"/>
    </source>
</evidence>
<evidence type="ECO:0000256" key="3">
    <source>
        <dbReference type="SAM" id="MobiDB-lite"/>
    </source>
</evidence>
<evidence type="ECO:0000269" key="4">
    <source>
    </source>
</evidence>
<evidence type="ECO:0000303" key="5">
    <source>
    </source>
</evidence>
<evidence type="ECO:0000305" key="6"/>
<organism>
    <name type="scientific">Mus musculus</name>
    <name type="common">Mouse</name>
    <dbReference type="NCBI Taxonomy" id="10090"/>
    <lineage>
        <taxon>Eukaryota</taxon>
        <taxon>Metazoa</taxon>
        <taxon>Chordata</taxon>
        <taxon>Craniata</taxon>
        <taxon>Vertebrata</taxon>
        <taxon>Euteleostomi</taxon>
        <taxon>Mammalia</taxon>
        <taxon>Eutheria</taxon>
        <taxon>Euarchontoglires</taxon>
        <taxon>Glires</taxon>
        <taxon>Rodentia</taxon>
        <taxon>Myomorpha</taxon>
        <taxon>Muroidea</taxon>
        <taxon>Muridae</taxon>
        <taxon>Murinae</taxon>
        <taxon>Mus</taxon>
        <taxon>Mus</taxon>
    </lineage>
</organism>
<keyword id="KW-0966">Cell projection</keyword>
<keyword id="KW-0969">Cilium</keyword>
<keyword id="KW-0221">Differentiation</keyword>
<keyword id="KW-0282">Flagellum</keyword>
<keyword id="KW-1185">Reference proteome</keyword>
<keyword id="KW-0744">Spermatogenesis</keyword>
<accession>Q9CVN6</accession>
<accession>Q5NCA8</accession>
<comment type="function">
    <text evidence="4">Plays a key role in the correct positioning of the annulus, a septin-based ring strucure in the sperm flagellum, serving both as a physical barrier and a membrane diffusion barrier that separates the midpiece (MP) from the principal piece (PP) (PubMed:38197861). This positioning is essential for proper sperm motility and function (PubMed:38197861). Interacts with CIBAR1 to form a complex which localizes to the curved membrane region of the flagellar pocket (PubMed:38197861). By doing so, may provide stability and rigidity to the periannular membrane to prevent membrane deformation (PubMed:38197861). This function is crucial for halting annulus migration at the proximal end of the fibrous sheath-containing PP (PubMed:38197861).</text>
</comment>
<comment type="subunit">
    <text evidence="1 4">Homodimer (By similarity). Interacts with CIBAR1 (via BAR-like domain); both proteins form a ninefold symmetric structure at the flagellar base; are recruited to the annulus in a mutually dependent manner and regulate annulus positionning (PubMed:38197861).</text>
</comment>
<comment type="subcellular location">
    <subcellularLocation>
        <location evidence="4">Cell projection</location>
        <location evidence="4">Cilium</location>
        <location evidence="4">Flagellum</location>
    </subcellularLocation>
    <text evidence="4">Localizes to the annulus at the junction between the midpiece (MP) and principal piece (PP) of the sperm flagellum.</text>
</comment>
<comment type="tissue specificity">
    <text evidence="4">Testis-specific.</text>
</comment>
<comment type="disruption phenotype">
    <text evidence="4">Male mice exhibit severe fertility defects, caused by kinked sperm flagella with the annulus mispositioned in the principal piece of the sperm.</text>
</comment>
<comment type="miscellaneous">
    <text>'Chibby' is Japanese for 'small'; the gene was so named for the RNAi phenotype seen in flies.</text>
</comment>
<comment type="similarity">
    <text evidence="6">Belongs to the chibby family.</text>
</comment>
<comment type="sequence caution" evidence="6">
    <conflict type="erroneous gene model prediction">
        <sequence resource="EMBL-CDS" id="CAI23999"/>
    </conflict>
</comment>
<name>CBY3_MOUSE</name>
<sequence>MADSKMKWGQAWDSSLGTATTSSSSATGSPSPFQNIRVPDTRAPRVAHTTFTLEAFECLAASQAGRLWKQVRQFWVDHFSRRFSPRRPPLRHISSMSTFYLLDHRTRQAELGLNYGEPRTRLSDEAFVFRGGRWTPEGKRASARTPLPSSTIPAWKPQVQPIKSQVLLEENNYLKLQQELLMDMLTETTARMQLLEKKVDADNNPAAPARSWKRKMPKQRGAGVLIIQPRALESR</sequence>
<feature type="chain" id="PRO_0000340101" description="Sperm annulus positionning complex subunit Chibby3">
    <location>
        <begin position="1"/>
        <end position="235"/>
    </location>
</feature>
<feature type="region of interest" description="Disordered" evidence="3">
    <location>
        <begin position="1"/>
        <end position="41"/>
    </location>
</feature>
<feature type="region of interest" description="Leucine-zipper; mediates homodimerization" evidence="2">
    <location>
        <begin position="167"/>
        <end position="181"/>
    </location>
</feature>
<feature type="compositionally biased region" description="Low complexity" evidence="3">
    <location>
        <begin position="14"/>
        <end position="32"/>
    </location>
</feature>
<feature type="sequence conflict" description="In Ref. 2; BAB24904." evidence="6" ref="2">
    <original>Q</original>
    <variation>E</variation>
    <location>
        <position position="10"/>
    </location>
</feature>
<gene>
    <name type="primary">Cby3</name>
</gene>